<name>EVL_HUMAN</name>
<reference key="1">
    <citation type="submission" date="1998-03" db="EMBL/GenBank/DDBJ databases">
        <authorList>
            <person name="Ohta S."/>
            <person name="Mineta T."/>
            <person name="Kimoto M."/>
            <person name="Tabuchi K."/>
        </authorList>
    </citation>
    <scope>NUCLEOTIDE SEQUENCE [MRNA] (ISOFORM 2)</scope>
</reference>
<reference key="2">
    <citation type="submission" date="2003-07" db="EMBL/GenBank/DDBJ databases">
        <title>Cloning of a new human cDNA homologous to R.norvegicus RNB6 mRNA.</title>
        <authorList>
            <person name="Wan Y.Z."/>
            <person name="Yu L."/>
            <person name="Yue P."/>
            <person name="Tu Q."/>
            <person name="Fu S.N."/>
            <person name="Zhao S.Y."/>
        </authorList>
    </citation>
    <scope>NUCLEOTIDE SEQUENCE [MRNA] (ISOFORM 1)</scope>
</reference>
<reference key="3">
    <citation type="journal article" date="2000" name="Proc. Natl. Acad. Sci. U.S.A.">
        <title>Gene expression profiling in the human hypothalamus-pituitary-adrenal axis and full-length cDNA cloning.</title>
        <authorList>
            <person name="Hu R.-M."/>
            <person name="Han Z.-G."/>
            <person name="Song H.-D."/>
            <person name="Peng Y.-D."/>
            <person name="Huang Q.-H."/>
            <person name="Ren S.-X."/>
            <person name="Gu Y.-J."/>
            <person name="Huang C.-H."/>
            <person name="Li Y.-B."/>
            <person name="Jiang C.-L."/>
            <person name="Fu G."/>
            <person name="Zhang Q.-H."/>
            <person name="Gu B.-W."/>
            <person name="Dai M."/>
            <person name="Mao Y.-F."/>
            <person name="Gao G.-F."/>
            <person name="Rong R."/>
            <person name="Ye M."/>
            <person name="Zhou J."/>
            <person name="Xu S.-H."/>
            <person name="Gu J."/>
            <person name="Shi J.-X."/>
            <person name="Jin W.-R."/>
            <person name="Zhang C.-K."/>
            <person name="Wu T.-M."/>
            <person name="Huang G.-Y."/>
            <person name="Chen Z."/>
            <person name="Chen M.-D."/>
            <person name="Chen J.-L."/>
        </authorList>
    </citation>
    <scope>NUCLEOTIDE SEQUENCE [LARGE SCALE MRNA] (ISOFORM 1)</scope>
    <source>
        <tissue>Adrenal gland</tissue>
    </source>
</reference>
<reference key="4">
    <citation type="journal article" date="2004" name="Nat. Genet.">
        <title>Complete sequencing and characterization of 21,243 full-length human cDNAs.</title>
        <authorList>
            <person name="Ota T."/>
            <person name="Suzuki Y."/>
            <person name="Nishikawa T."/>
            <person name="Otsuki T."/>
            <person name="Sugiyama T."/>
            <person name="Irie R."/>
            <person name="Wakamatsu A."/>
            <person name="Hayashi K."/>
            <person name="Sato H."/>
            <person name="Nagai K."/>
            <person name="Kimura K."/>
            <person name="Makita H."/>
            <person name="Sekine M."/>
            <person name="Obayashi M."/>
            <person name="Nishi T."/>
            <person name="Shibahara T."/>
            <person name="Tanaka T."/>
            <person name="Ishii S."/>
            <person name="Yamamoto J."/>
            <person name="Saito K."/>
            <person name="Kawai Y."/>
            <person name="Isono Y."/>
            <person name="Nakamura Y."/>
            <person name="Nagahari K."/>
            <person name="Murakami K."/>
            <person name="Yasuda T."/>
            <person name="Iwayanagi T."/>
            <person name="Wagatsuma M."/>
            <person name="Shiratori A."/>
            <person name="Sudo H."/>
            <person name="Hosoiri T."/>
            <person name="Kaku Y."/>
            <person name="Kodaira H."/>
            <person name="Kondo H."/>
            <person name="Sugawara M."/>
            <person name="Takahashi M."/>
            <person name="Kanda K."/>
            <person name="Yokoi T."/>
            <person name="Furuya T."/>
            <person name="Kikkawa E."/>
            <person name="Omura Y."/>
            <person name="Abe K."/>
            <person name="Kamihara K."/>
            <person name="Katsuta N."/>
            <person name="Sato K."/>
            <person name="Tanikawa M."/>
            <person name="Yamazaki M."/>
            <person name="Ninomiya K."/>
            <person name="Ishibashi T."/>
            <person name="Yamashita H."/>
            <person name="Murakawa K."/>
            <person name="Fujimori K."/>
            <person name="Tanai H."/>
            <person name="Kimata M."/>
            <person name="Watanabe M."/>
            <person name="Hiraoka S."/>
            <person name="Chiba Y."/>
            <person name="Ishida S."/>
            <person name="Ono Y."/>
            <person name="Takiguchi S."/>
            <person name="Watanabe S."/>
            <person name="Yosida M."/>
            <person name="Hotuta T."/>
            <person name="Kusano J."/>
            <person name="Kanehori K."/>
            <person name="Takahashi-Fujii A."/>
            <person name="Hara H."/>
            <person name="Tanase T.-O."/>
            <person name="Nomura Y."/>
            <person name="Togiya S."/>
            <person name="Komai F."/>
            <person name="Hara R."/>
            <person name="Takeuchi K."/>
            <person name="Arita M."/>
            <person name="Imose N."/>
            <person name="Musashino K."/>
            <person name="Yuuki H."/>
            <person name="Oshima A."/>
            <person name="Sasaki N."/>
            <person name="Aotsuka S."/>
            <person name="Yoshikawa Y."/>
            <person name="Matsunawa H."/>
            <person name="Ichihara T."/>
            <person name="Shiohata N."/>
            <person name="Sano S."/>
            <person name="Moriya S."/>
            <person name="Momiyama H."/>
            <person name="Satoh N."/>
            <person name="Takami S."/>
            <person name="Terashima Y."/>
            <person name="Suzuki O."/>
            <person name="Nakagawa S."/>
            <person name="Senoh A."/>
            <person name="Mizoguchi H."/>
            <person name="Goto Y."/>
            <person name="Shimizu F."/>
            <person name="Wakebe H."/>
            <person name="Hishigaki H."/>
            <person name="Watanabe T."/>
            <person name="Sugiyama A."/>
            <person name="Takemoto M."/>
            <person name="Kawakami B."/>
            <person name="Yamazaki M."/>
            <person name="Watanabe K."/>
            <person name="Kumagai A."/>
            <person name="Itakura S."/>
            <person name="Fukuzumi Y."/>
            <person name="Fujimori Y."/>
            <person name="Komiyama M."/>
            <person name="Tashiro H."/>
            <person name="Tanigami A."/>
            <person name="Fujiwara T."/>
            <person name="Ono T."/>
            <person name="Yamada K."/>
            <person name="Fujii Y."/>
            <person name="Ozaki K."/>
            <person name="Hirao M."/>
            <person name="Ohmori Y."/>
            <person name="Kawabata A."/>
            <person name="Hikiji T."/>
            <person name="Kobatake N."/>
            <person name="Inagaki H."/>
            <person name="Ikema Y."/>
            <person name="Okamoto S."/>
            <person name="Okitani R."/>
            <person name="Kawakami T."/>
            <person name="Noguchi S."/>
            <person name="Itoh T."/>
            <person name="Shigeta K."/>
            <person name="Senba T."/>
            <person name="Matsumura K."/>
            <person name="Nakajima Y."/>
            <person name="Mizuno T."/>
            <person name="Morinaga M."/>
            <person name="Sasaki M."/>
            <person name="Togashi T."/>
            <person name="Oyama M."/>
            <person name="Hata H."/>
            <person name="Watanabe M."/>
            <person name="Komatsu T."/>
            <person name="Mizushima-Sugano J."/>
            <person name="Satoh T."/>
            <person name="Shirai Y."/>
            <person name="Takahashi Y."/>
            <person name="Nakagawa K."/>
            <person name="Okumura K."/>
            <person name="Nagase T."/>
            <person name="Nomura N."/>
            <person name="Kikuchi H."/>
            <person name="Masuho Y."/>
            <person name="Yamashita R."/>
            <person name="Nakai K."/>
            <person name="Yada T."/>
            <person name="Nakamura Y."/>
            <person name="Ohara O."/>
            <person name="Isogai T."/>
            <person name="Sugano S."/>
        </authorList>
    </citation>
    <scope>NUCLEOTIDE SEQUENCE [LARGE SCALE MRNA] (ISOFORMS 1 AND 3)</scope>
    <source>
        <tissue>Brain</tissue>
        <tissue>Substantia nigra</tissue>
    </source>
</reference>
<reference key="5">
    <citation type="journal article" date="2003" name="Nature">
        <title>The DNA sequence and analysis of human chromosome 14.</title>
        <authorList>
            <person name="Heilig R."/>
            <person name="Eckenberg R."/>
            <person name="Petit J.-L."/>
            <person name="Fonknechten N."/>
            <person name="Da Silva C."/>
            <person name="Cattolico L."/>
            <person name="Levy M."/>
            <person name="Barbe V."/>
            <person name="De Berardinis V."/>
            <person name="Ureta-Vidal A."/>
            <person name="Pelletier E."/>
            <person name="Vico V."/>
            <person name="Anthouard V."/>
            <person name="Rowen L."/>
            <person name="Madan A."/>
            <person name="Qin S."/>
            <person name="Sun H."/>
            <person name="Du H."/>
            <person name="Pepin K."/>
            <person name="Artiguenave F."/>
            <person name="Robert C."/>
            <person name="Cruaud C."/>
            <person name="Bruels T."/>
            <person name="Jaillon O."/>
            <person name="Friedlander L."/>
            <person name="Samson G."/>
            <person name="Brottier P."/>
            <person name="Cure S."/>
            <person name="Segurens B."/>
            <person name="Aniere F."/>
            <person name="Samain S."/>
            <person name="Crespeau H."/>
            <person name="Abbasi N."/>
            <person name="Aiach N."/>
            <person name="Boscus D."/>
            <person name="Dickhoff R."/>
            <person name="Dors M."/>
            <person name="Dubois I."/>
            <person name="Friedman C."/>
            <person name="Gouyvenoux M."/>
            <person name="James R."/>
            <person name="Madan A."/>
            <person name="Mairey-Estrada B."/>
            <person name="Mangenot S."/>
            <person name="Martins N."/>
            <person name="Menard M."/>
            <person name="Oztas S."/>
            <person name="Ratcliffe A."/>
            <person name="Shaffer T."/>
            <person name="Trask B."/>
            <person name="Vacherie B."/>
            <person name="Bellemere C."/>
            <person name="Belser C."/>
            <person name="Besnard-Gonnet M."/>
            <person name="Bartol-Mavel D."/>
            <person name="Boutard M."/>
            <person name="Briez-Silla S."/>
            <person name="Combette S."/>
            <person name="Dufosse-Laurent V."/>
            <person name="Ferron C."/>
            <person name="Lechaplais C."/>
            <person name="Louesse C."/>
            <person name="Muselet D."/>
            <person name="Magdelenat G."/>
            <person name="Pateau E."/>
            <person name="Petit E."/>
            <person name="Sirvain-Trukniewicz P."/>
            <person name="Trybou A."/>
            <person name="Vega-Czarny N."/>
            <person name="Bataille E."/>
            <person name="Bluet E."/>
            <person name="Bordelais I."/>
            <person name="Dubois M."/>
            <person name="Dumont C."/>
            <person name="Guerin T."/>
            <person name="Haffray S."/>
            <person name="Hammadi R."/>
            <person name="Muanga J."/>
            <person name="Pellouin V."/>
            <person name="Robert D."/>
            <person name="Wunderle E."/>
            <person name="Gauguet G."/>
            <person name="Roy A."/>
            <person name="Sainte-Marthe L."/>
            <person name="Verdier J."/>
            <person name="Verdier-Discala C."/>
            <person name="Hillier L.W."/>
            <person name="Fulton L."/>
            <person name="McPherson J."/>
            <person name="Matsuda F."/>
            <person name="Wilson R."/>
            <person name="Scarpelli C."/>
            <person name="Gyapay G."/>
            <person name="Wincker P."/>
            <person name="Saurin W."/>
            <person name="Quetier F."/>
            <person name="Waterston R."/>
            <person name="Hood L."/>
            <person name="Weissenbach J."/>
        </authorList>
    </citation>
    <scope>NUCLEOTIDE SEQUENCE [LARGE SCALE GENOMIC DNA]</scope>
</reference>
<reference key="6">
    <citation type="submission" date="2005-07" db="EMBL/GenBank/DDBJ databases">
        <authorList>
            <person name="Mural R.J."/>
            <person name="Istrail S."/>
            <person name="Sutton G.G."/>
            <person name="Florea L."/>
            <person name="Halpern A.L."/>
            <person name="Mobarry C.M."/>
            <person name="Lippert R."/>
            <person name="Walenz B."/>
            <person name="Shatkay H."/>
            <person name="Dew I."/>
            <person name="Miller J.R."/>
            <person name="Flanigan M.J."/>
            <person name="Edwards N.J."/>
            <person name="Bolanos R."/>
            <person name="Fasulo D."/>
            <person name="Halldorsson B.V."/>
            <person name="Hannenhalli S."/>
            <person name="Turner R."/>
            <person name="Yooseph S."/>
            <person name="Lu F."/>
            <person name="Nusskern D.R."/>
            <person name="Shue B.C."/>
            <person name="Zheng X.H."/>
            <person name="Zhong F."/>
            <person name="Delcher A.L."/>
            <person name="Huson D.H."/>
            <person name="Kravitz S.A."/>
            <person name="Mouchard L."/>
            <person name="Reinert K."/>
            <person name="Remington K.A."/>
            <person name="Clark A.G."/>
            <person name="Waterman M.S."/>
            <person name="Eichler E.E."/>
            <person name="Adams M.D."/>
            <person name="Hunkapiller M.W."/>
            <person name="Myers E.W."/>
            <person name="Venter J.C."/>
        </authorList>
    </citation>
    <scope>NUCLEOTIDE SEQUENCE [LARGE SCALE GENOMIC DNA]</scope>
</reference>
<reference key="7">
    <citation type="journal article" date="2004" name="Genome Res.">
        <title>The status, quality, and expansion of the NIH full-length cDNA project: the Mammalian Gene Collection (MGC).</title>
        <authorList>
            <consortium name="The MGC Project Team"/>
        </authorList>
    </citation>
    <scope>NUCLEOTIDE SEQUENCE [LARGE SCALE MRNA] (ISOFORMS 1 AND 2)</scope>
    <source>
        <tissue>Lung</tissue>
        <tissue>Pancreas</tissue>
    </source>
</reference>
<reference key="8">
    <citation type="submission" date="1999-02" db="EMBL/GenBank/DDBJ databases">
        <authorList>
            <person name="Mei G."/>
            <person name="Yu W."/>
            <person name="Gibbs R.A."/>
        </authorList>
    </citation>
    <scope>NUCLEOTIDE SEQUENCE [LARGE SCALE MRNA] OF 55-416</scope>
    <source>
        <tissue>Brain</tissue>
    </source>
</reference>
<reference key="9">
    <citation type="journal article" date="2007" name="BMC Genomics">
        <title>The full-ORF clone resource of the German cDNA consortium.</title>
        <authorList>
            <person name="Bechtel S."/>
            <person name="Rosenfelder H."/>
            <person name="Duda A."/>
            <person name="Schmidt C.P."/>
            <person name="Ernst U."/>
            <person name="Wellenreuther R."/>
            <person name="Mehrle A."/>
            <person name="Schuster C."/>
            <person name="Bahr A."/>
            <person name="Bloecker H."/>
            <person name="Heubner D."/>
            <person name="Hoerlein A."/>
            <person name="Michel G."/>
            <person name="Wedler H."/>
            <person name="Koehrer K."/>
            <person name="Ottenwaelder B."/>
            <person name="Poustka A."/>
            <person name="Wiemann S."/>
            <person name="Schupp I."/>
        </authorList>
    </citation>
    <scope>NUCLEOTIDE SEQUENCE [LARGE SCALE MRNA] OF 163-364</scope>
    <source>
        <tissue>Uterus</tissue>
    </source>
</reference>
<reference key="10">
    <citation type="journal article" date="2000" name="J. Cell Biol.">
        <title>Fyn-binding protein (Fyb)/SLP-76-associated protein (SLAP), Ena/vasodilator-stimulated phosphoprotein (VASP) proteins and the Arp2/3 complex link T cell receptor (TCR) signaling to the actin cytoskeleton.</title>
        <authorList>
            <person name="Krause M."/>
            <person name="Sechi A.S."/>
            <person name="Konradt M."/>
            <person name="Monner D."/>
            <person name="Gertler F.B."/>
            <person name="Wehland J."/>
        </authorList>
    </citation>
    <scope>INTERACTION WITH FYB1</scope>
</reference>
<reference key="11">
    <citation type="journal article" date="2008" name="J. Proteome Res.">
        <title>Phosphorylation analysis of primary human T lymphocytes using sequential IMAC and titanium oxide enrichment.</title>
        <authorList>
            <person name="Carrascal M."/>
            <person name="Ovelleiro D."/>
            <person name="Casas V."/>
            <person name="Gay M."/>
            <person name="Abian J."/>
        </authorList>
    </citation>
    <scope>PHOSPHORYLATION [LARGE SCALE ANALYSIS] AT SER-349 AND SER-369</scope>
    <scope>IDENTIFICATION BY MASS SPECTROMETRY [LARGE SCALE ANALYSIS]</scope>
    <source>
        <tissue>T-cell</tissue>
    </source>
</reference>
<reference key="12">
    <citation type="journal article" date="2008" name="Proc. Natl. Acad. Sci. U.S.A.">
        <title>A quantitative atlas of mitotic phosphorylation.</title>
        <authorList>
            <person name="Dephoure N."/>
            <person name="Zhou C."/>
            <person name="Villen J."/>
            <person name="Beausoleil S.A."/>
            <person name="Bakalarski C.E."/>
            <person name="Elledge S.J."/>
            <person name="Gygi S.P."/>
        </authorList>
    </citation>
    <scope>PHOSPHORYLATION [LARGE SCALE ANALYSIS] AT SER-246; SER-304; SER-306; SER-329; SER-331 AND SER-349</scope>
    <scope>IDENTIFICATION BY MASS SPECTROMETRY [LARGE SCALE ANALYSIS]</scope>
    <source>
        <tissue>Cervix carcinoma</tissue>
    </source>
</reference>
<reference key="13">
    <citation type="journal article" date="2009" name="Sci. Signal.">
        <title>Quantitative phosphoproteomic analysis of T cell receptor signaling reveals system-wide modulation of protein-protein interactions.</title>
        <authorList>
            <person name="Mayya V."/>
            <person name="Lundgren D.H."/>
            <person name="Hwang S.-I."/>
            <person name="Rezaul K."/>
            <person name="Wu L."/>
            <person name="Eng J.K."/>
            <person name="Rodionov V."/>
            <person name="Han D.K."/>
        </authorList>
    </citation>
    <scope>PHOSPHORYLATION [LARGE SCALE ANALYSIS] AT SER-304; SER-341 AND SER-354</scope>
    <scope>IDENTIFICATION BY MASS SPECTROMETRY [LARGE SCALE ANALYSIS]</scope>
    <source>
        <tissue>Leukemic T-cell</tissue>
    </source>
</reference>
<reference key="14">
    <citation type="journal article" date="2010" name="Sci. Signal.">
        <title>Quantitative phosphoproteomics reveals widespread full phosphorylation site occupancy during mitosis.</title>
        <authorList>
            <person name="Olsen J.V."/>
            <person name="Vermeulen M."/>
            <person name="Santamaria A."/>
            <person name="Kumar C."/>
            <person name="Miller M.L."/>
            <person name="Jensen L.J."/>
            <person name="Gnad F."/>
            <person name="Cox J."/>
            <person name="Jensen T.S."/>
            <person name="Nigg E.A."/>
            <person name="Brunak S."/>
            <person name="Mann M."/>
        </authorList>
    </citation>
    <scope>IDENTIFICATION BY MASS SPECTROMETRY [LARGE SCALE ANALYSIS]</scope>
    <source>
        <tissue>Cervix carcinoma</tissue>
    </source>
</reference>
<reference key="15">
    <citation type="journal article" date="2011" name="BMC Syst. Biol.">
        <title>Initial characterization of the human central proteome.</title>
        <authorList>
            <person name="Burkard T.R."/>
            <person name="Planyavsky M."/>
            <person name="Kaupe I."/>
            <person name="Breitwieser F.P."/>
            <person name="Buerckstuemmer T."/>
            <person name="Bennett K.L."/>
            <person name="Superti-Furga G."/>
            <person name="Colinge J."/>
        </authorList>
    </citation>
    <scope>IDENTIFICATION BY MASS SPECTROMETRY [LARGE SCALE ANALYSIS]</scope>
</reference>
<reference key="16">
    <citation type="journal article" date="2011" name="Sci. Signal.">
        <title>System-wide temporal characterization of the proteome and phosphoproteome of human embryonic stem cell differentiation.</title>
        <authorList>
            <person name="Rigbolt K.T."/>
            <person name="Prokhorova T.A."/>
            <person name="Akimov V."/>
            <person name="Henningsen J."/>
            <person name="Johansen P.T."/>
            <person name="Kratchmarova I."/>
            <person name="Kassem M."/>
            <person name="Mann M."/>
            <person name="Olsen J.V."/>
            <person name="Blagoev B."/>
        </authorList>
    </citation>
    <scope>IDENTIFICATION BY MASS SPECTROMETRY [LARGE SCALE ANALYSIS]</scope>
</reference>
<reference key="17">
    <citation type="journal article" date="2013" name="J. Proteome Res.">
        <title>Toward a comprehensive characterization of a human cancer cell phosphoproteome.</title>
        <authorList>
            <person name="Zhou H."/>
            <person name="Di Palma S."/>
            <person name="Preisinger C."/>
            <person name="Peng M."/>
            <person name="Polat A.N."/>
            <person name="Heck A.J."/>
            <person name="Mohammed S."/>
        </authorList>
    </citation>
    <scope>PHOSPHORYLATION [LARGE SCALE ANALYSIS] AT SER-304; SER-331 AND SER-369</scope>
    <scope>IDENTIFICATION BY MASS SPECTROMETRY [LARGE SCALE ANALYSIS]</scope>
    <source>
        <tissue>Cervix carcinoma</tissue>
        <tissue>Erythroleukemia</tissue>
    </source>
</reference>
<reference key="18">
    <citation type="journal article" date="2014" name="J. Proteomics">
        <title>An enzyme assisted RP-RPLC approach for in-depth analysis of human liver phosphoproteome.</title>
        <authorList>
            <person name="Bian Y."/>
            <person name="Song C."/>
            <person name="Cheng K."/>
            <person name="Dong M."/>
            <person name="Wang F."/>
            <person name="Huang J."/>
            <person name="Sun D."/>
            <person name="Wang L."/>
            <person name="Ye M."/>
            <person name="Zou H."/>
        </authorList>
    </citation>
    <scope>PHOSPHORYLATION [LARGE SCALE ANALYSIS] AT SER-349 AND SER-369</scope>
    <scope>IDENTIFICATION BY MASS SPECTROMETRY [LARGE SCALE ANALYSIS]</scope>
    <source>
        <tissue>Liver</tissue>
    </source>
</reference>
<reference key="19">
    <citation type="submission" date="2016-11" db="UniProtKB">
        <authorList>
            <person name="Lemonidis K."/>
        </authorList>
    </citation>
    <scope>IDENTIFICATION (ISOFORM 5)</scope>
    <source>
        <tissue>Fetal brain</tissue>
    </source>
</reference>
<reference key="20">
    <citation type="journal article" date="2000" name="J. Biol. Chem.">
        <title>The orthologous human and murine semaphorin 6A-1 proteins (SEMA6A-1/Sema6A-1) bind to the enabled/vasodilator-stimulated phosphoprotein-like protein (EVL) via a novel carboxyl-terminal zyxin-like domain.</title>
        <authorList>
            <person name="Klostermann A."/>
            <person name="Lutz B."/>
            <person name="Gertler F."/>
            <person name="Behl C."/>
        </authorList>
    </citation>
    <scope>INTERACTION WITH SEMA6A</scope>
</reference>
<reference key="21">
    <citation type="journal article" date="2004" name="Dev. Cell">
        <title>Lamellipodin, an Ena/VASP ligand, is implicated in the regulation of lamellipodial dynamics.</title>
        <authorList>
            <person name="Krause M."/>
            <person name="Leslie J.D."/>
            <person name="Stewart M."/>
            <person name="Lafuente E.M."/>
            <person name="Valderrama F."/>
            <person name="Jagannathan R."/>
            <person name="Strasser G.A."/>
            <person name="Rubinson D.A."/>
            <person name="Liu H."/>
            <person name="Way M."/>
            <person name="Yaffe M.B."/>
            <person name="Boussiotis V.A."/>
            <person name="Gertler F.B."/>
        </authorList>
    </citation>
    <scope>INTERACTION WITH RAPH1</scope>
</reference>
<reference key="22">
    <citation type="journal article" date="2007" name="Mol. Cell">
        <title>Tes, a specific Mena interacting partner, breaks the rules for EVH1 binding.</title>
        <authorList>
            <person name="Boeda B."/>
            <person name="Briggs D.C."/>
            <person name="Higgins T."/>
            <person name="Garvalov B.K."/>
            <person name="Fadden A.J."/>
            <person name="McDonald N.Q."/>
            <person name="Way M."/>
        </authorList>
    </citation>
    <scope>INTERACTION WITH ZYX</scope>
</reference>
<reference key="23">
    <citation type="journal article" date="2017" name="J. Biol. Chem.">
        <title>Peptide array based screening reveals a large number of proteins interacting with the ankyrin repeat domain of the zDHHC17 S-acyltransferase.</title>
        <authorList>
            <person name="Lemonidis K."/>
            <person name="MacLeod R."/>
            <person name="Baillie G.S."/>
            <person name="Chamberlain L.H."/>
        </authorList>
    </citation>
    <scope>INTERACTION WITH ZDHHC17</scope>
</reference>
<reference key="24">
    <citation type="journal article" date="2006" name="Science">
        <title>The consensus coding sequences of human breast and colorectal cancers.</title>
        <authorList>
            <person name="Sjoeblom T."/>
            <person name="Jones S."/>
            <person name="Wood L.D."/>
            <person name="Parsons D.W."/>
            <person name="Lin J."/>
            <person name="Barber T.D."/>
            <person name="Mandelker D."/>
            <person name="Leary R.J."/>
            <person name="Ptak J."/>
            <person name="Silliman N."/>
            <person name="Szabo S."/>
            <person name="Buckhaults P."/>
            <person name="Farrell C."/>
            <person name="Meeh P."/>
            <person name="Markowitz S.D."/>
            <person name="Willis J."/>
            <person name="Dawson D."/>
            <person name="Willson J.K.V."/>
            <person name="Gazdar A.F."/>
            <person name="Hartigan J."/>
            <person name="Wu L."/>
            <person name="Liu C."/>
            <person name="Parmigiani G."/>
            <person name="Park B.H."/>
            <person name="Bachman K.E."/>
            <person name="Papadopoulos N."/>
            <person name="Vogelstein B."/>
            <person name="Kinzler K.W."/>
            <person name="Velculescu V.E."/>
        </authorList>
    </citation>
    <scope>VARIANTS [LARGE SCALE ANALYSIS] LEU-188 AND LEU-247</scope>
</reference>
<sequence>MSEQSICQARASVMVYDDTSKKWVPIKPGQQGFSRINIYHNTASNTFRVVGVKLQDQQVVINYSIVKGLKYNQATPTFHQWRDARQVYGLNFASKEEATTFSNAMLFALNIMNSQEGGPSSQRQVQNGPSPDEMDIQRRQVMEQHQQQRQESLERRTSATGPILPPGHPSSAASAPVSCSGPPPPPPPPVPPPPTGATPPPPPPLPAGGAQGSSHDESSMSGLAAAIAGAKLRRVQRPEDASGGSSPSGTSKSDANRASSGGGGGGLMEEMNKLLAKRRKAASQSDKPAEKKEDESQMEDPSTSPSPGTRAASQPPNSSEAGRKPWERSNSVEKPVSSILSRTPSVAKSPEAKSPLQSQPHSRMKPAGSVNDMALDAFDLDRMKQEILEEVVRELHKVKEEIIDAIRQELSGISTT</sequence>
<gene>
    <name type="primary">EVL</name>
    <name type="synonym">RNB6</name>
</gene>
<proteinExistence type="evidence at protein level"/>
<accession>Q9UI08</accession>
<accession>A8K105</accession>
<accession>B7Z3I5</accession>
<accession>O95884</accession>
<accession>Q7Z522</accession>
<accession>Q8TBV1</accession>
<accession>Q9UF25</accession>
<accession>Q9UIC2</accession>
<feature type="chain" id="PRO_0000087104" description="Ena/VASP-like protein">
    <location>
        <begin position="1"/>
        <end position="416"/>
    </location>
</feature>
<feature type="domain" description="WH1" evidence="4">
    <location>
        <begin position="1"/>
        <end position="112"/>
    </location>
</feature>
<feature type="region of interest" description="Disordered" evidence="5">
    <location>
        <begin position="114"/>
        <end position="133"/>
    </location>
</feature>
<feature type="region of interest" description="Disordered" evidence="5">
    <location>
        <begin position="141"/>
        <end position="369"/>
    </location>
</feature>
<feature type="region of interest" description="EVH2">
    <location>
        <begin position="222"/>
        <end position="413"/>
    </location>
</feature>
<feature type="region of interest" description="EVH2 block A">
    <location>
        <begin position="222"/>
        <end position="242"/>
    </location>
</feature>
<feature type="region of interest" description="EVH2 block B">
    <location>
        <begin position="265"/>
        <end position="282"/>
    </location>
</feature>
<feature type="region of interest" description="Required for interaction with ZDHHC17" evidence="11">
    <location>
        <begin position="342"/>
        <end position="362"/>
    </location>
</feature>
<feature type="region of interest" description="EVH2 block C">
    <location>
        <begin position="379"/>
        <end position="413"/>
    </location>
</feature>
<feature type="short sequence motif" description="KLKR">
    <location>
        <begin position="231"/>
        <end position="234"/>
    </location>
</feature>
<feature type="compositionally biased region" description="Polar residues" evidence="5">
    <location>
        <begin position="114"/>
        <end position="129"/>
    </location>
</feature>
<feature type="compositionally biased region" description="Basic and acidic residues" evidence="5">
    <location>
        <begin position="141"/>
        <end position="157"/>
    </location>
</feature>
<feature type="compositionally biased region" description="Low complexity" evidence="5">
    <location>
        <begin position="169"/>
        <end position="180"/>
    </location>
</feature>
<feature type="compositionally biased region" description="Pro residues" evidence="5">
    <location>
        <begin position="181"/>
        <end position="206"/>
    </location>
</feature>
<feature type="compositionally biased region" description="Low complexity" evidence="5">
    <location>
        <begin position="242"/>
        <end position="253"/>
    </location>
</feature>
<feature type="compositionally biased region" description="Polar residues" evidence="5">
    <location>
        <begin position="299"/>
        <end position="320"/>
    </location>
</feature>
<feature type="compositionally biased region" description="Basic and acidic residues" evidence="5">
    <location>
        <begin position="321"/>
        <end position="331"/>
    </location>
</feature>
<feature type="modified residue" description="Phosphoserine" evidence="2">
    <location>
        <position position="130"/>
    </location>
</feature>
<feature type="modified residue" description="Phosphoserine" evidence="18">
    <location>
        <position position="246"/>
    </location>
</feature>
<feature type="modified residue" description="Phosphoserine" evidence="2">
    <location>
        <position position="259"/>
    </location>
</feature>
<feature type="modified residue" description="Phosphoserine" evidence="18 20 21">
    <location>
        <position position="304"/>
    </location>
</feature>
<feature type="modified residue" description="Phosphoserine" evidence="18">
    <location>
        <position position="306"/>
    </location>
</feature>
<feature type="modified residue" description="Phosphoserine" evidence="18">
    <location>
        <position position="329"/>
    </location>
</feature>
<feature type="modified residue" description="Phosphoserine" evidence="18 21">
    <location>
        <position position="331"/>
    </location>
</feature>
<feature type="modified residue" description="Phosphoserine" evidence="20">
    <location>
        <position position="341"/>
    </location>
</feature>
<feature type="modified residue" description="Phosphoserine" evidence="18 19 22">
    <location>
        <position position="349"/>
    </location>
</feature>
<feature type="modified residue" description="Phosphoserine" evidence="20">
    <location>
        <position position="354"/>
    </location>
</feature>
<feature type="modified residue" description="Phosphoserine" evidence="19 21 22">
    <location>
        <position position="369"/>
    </location>
</feature>
<feature type="splice variant" id="VSP_004044" description="In isoform 1 and isoform 5." evidence="12 14 15 16">
    <original>M</original>
    <variation>MAT</variation>
    <location>
        <position position="1"/>
    </location>
</feature>
<feature type="splice variant" id="VSP_057322" description="In isoform 3." evidence="13">
    <original>M</original>
    <variation>MFAFEEF</variation>
    <location>
        <position position="1"/>
    </location>
</feature>
<feature type="splice variant" id="VSP_058778" description="In isoform 5." evidence="15">
    <location>
        <begin position="342"/>
        <end position="362"/>
    </location>
</feature>
<feature type="splice variant" id="VSP_057323" description="In isoform 3." evidence="13">
    <original>MKPAGSVNDMALDAFDLDRMKQEILEEVVRELHKVKEEIIDAIRQELSGISTT</original>
    <variation>YRTTLLLTCPPGFGAPLSPVP</variation>
    <location>
        <begin position="364"/>
        <end position="416"/>
    </location>
</feature>
<feature type="splice variant" id="VSP_058779" description="In isoform 4.">
    <location>
        <begin position="368"/>
        <end position="397"/>
    </location>
</feature>
<feature type="sequence variant" id="VAR_036464" description="In a colorectal cancer sample; somatic mutation; dbSNP:rs367737727." evidence="9">
    <original>P</original>
    <variation>L</variation>
    <location>
        <position position="188"/>
    </location>
</feature>
<feature type="sequence variant" id="VAR_036465" description="In a colorectal cancer sample; somatic mutation." evidence="9">
    <original>P</original>
    <variation>L</variation>
    <location>
        <position position="247"/>
    </location>
</feature>
<feature type="sequence conflict" description="In Ref. 3; AAF17197." evidence="17" ref="3">
    <original>P</original>
    <variation>S</variation>
    <location>
        <position position="201"/>
    </location>
</feature>
<feature type="sequence conflict" description="In Ref. 2; AAP97156." evidence="17" ref="2">
    <original>S</original>
    <variation>N</variation>
    <location>
        <position position="329"/>
    </location>
</feature>
<feature type="sequence conflict" description="In Ref. 9; CAB63763." evidence="17" ref="9">
    <original>M</original>
    <variation>Y</variation>
    <location>
        <position position="364"/>
    </location>
</feature>
<protein>
    <recommendedName>
        <fullName>Ena/VASP-like protein</fullName>
    </recommendedName>
    <alternativeName>
        <fullName>Ena/vasodilator-stimulated phosphoprotein-like</fullName>
    </alternativeName>
</protein>
<organism>
    <name type="scientific">Homo sapiens</name>
    <name type="common">Human</name>
    <dbReference type="NCBI Taxonomy" id="9606"/>
    <lineage>
        <taxon>Eukaryota</taxon>
        <taxon>Metazoa</taxon>
        <taxon>Chordata</taxon>
        <taxon>Craniata</taxon>
        <taxon>Vertebrata</taxon>
        <taxon>Euteleostomi</taxon>
        <taxon>Mammalia</taxon>
        <taxon>Eutheria</taxon>
        <taxon>Euarchontoglires</taxon>
        <taxon>Primates</taxon>
        <taxon>Haplorrhini</taxon>
        <taxon>Catarrhini</taxon>
        <taxon>Hominidae</taxon>
        <taxon>Homo</taxon>
    </lineage>
</organism>
<comment type="function">
    <text>Ena/VASP proteins are actin-associated proteins involved in a range of processes dependent on cytoskeleton remodeling and cell polarity such as axon guidance and lamellipodial and filopodial dynamics in migrating cells. EVL enhances actin nucleation and polymerization.</text>
</comment>
<comment type="subunit">
    <text evidence="3 6 7 8 10 11">Homotetramer (By similarity). Binds to the SH3 domains of ABL1, LYN and SRC. Also binds to profilin, with preference for isoform IIa of PFN2, and the WW domain of APBB1/FE65. Binds to SEMA6A. Interacts, via the Pro-rich region, with the C-terminal SH3 domain of DNMBP. Interacts with RAPH1. Binds, via the EVH1 domain, the Pro-rich domain of Listeria monocytogenes actA (By similarity). Binds, via the EVH1 domain, the Pro-rich domain of ZYX. Interacts with FYB1 (PubMed:10747096). Interacts with ZDHHC17 (PubMed:28882895).</text>
</comment>
<comment type="interaction">
    <interactant intactId="EBI-346653">
        <id>Q9UI08</id>
    </interactant>
    <interactant intactId="EBI-742038">
        <id>Q9P2A4</id>
        <label>ABI3</label>
    </interactant>
    <organismsDiffer>false</organismsDiffer>
    <experiments>4</experiments>
</comment>
<comment type="interaction">
    <interactant intactId="EBI-346653">
        <id>Q9UI08</id>
    </interactant>
    <interactant intactId="EBI-351450">
        <id>Q13813</id>
        <label>SPTAN1</label>
    </interactant>
    <organismsDiffer>false</organismsDiffer>
    <experiments>4</experiments>
</comment>
<comment type="interaction">
    <interactant intactId="EBI-346653">
        <id>Q9UI08</id>
    </interactant>
    <interactant intactId="EBI-720828">
        <id>Q9C026</id>
        <label>TRIM9</label>
    </interactant>
    <organismsDiffer>false</organismsDiffer>
    <experiments>3</experiments>
</comment>
<comment type="interaction">
    <interactant intactId="EBI-6448852">
        <id>Q9UI08-2</id>
    </interactant>
    <interactant intactId="EBI-742038">
        <id>Q9P2A4</id>
        <label>ABI3</label>
    </interactant>
    <organismsDiffer>false</organismsDiffer>
    <experiments>3</experiments>
</comment>
<comment type="interaction">
    <interactant intactId="EBI-6448852">
        <id>Q9UI08-2</id>
    </interactant>
    <interactant intactId="EBI-10968534">
        <id>P50570-2</id>
        <label>DNM2</label>
    </interactant>
    <organismsDiffer>false</organismsDiffer>
    <experiments>3</experiments>
</comment>
<comment type="interaction">
    <interactant intactId="EBI-6448852">
        <id>Q9UI08-2</id>
    </interactant>
    <interactant intactId="EBI-11110431">
        <id>Q8TB36</id>
        <label>GDAP1</label>
    </interactant>
    <organismsDiffer>false</organismsDiffer>
    <experiments>3</experiments>
</comment>
<comment type="interaction">
    <interactant intactId="EBI-6448852">
        <id>Q9UI08-2</id>
    </interactant>
    <interactant intactId="EBI-466029">
        <id>P42858</id>
        <label>HTT</label>
    </interactant>
    <organismsDiffer>false</organismsDiffer>
    <experiments>20</experiments>
</comment>
<comment type="interaction">
    <interactant intactId="EBI-6448852">
        <id>Q9UI08-2</id>
    </interactant>
    <interactant intactId="EBI-25847109">
        <id>O14656-2</id>
        <label>TOR1A</label>
    </interactant>
    <organismsDiffer>false</organismsDiffer>
    <experiments>3</experiments>
</comment>
<comment type="interaction">
    <interactant intactId="EBI-6448852">
        <id>Q9UI08-2</id>
    </interactant>
    <interactant intactId="EBI-720828">
        <id>Q9C026</id>
        <label>TRIM9</label>
    </interactant>
    <organismsDiffer>false</organismsDiffer>
    <experiments>3</experiments>
</comment>
<comment type="interaction">
    <interactant intactId="EBI-6448852">
        <id>Q9UI08-2</id>
    </interactant>
    <interactant intactId="EBI-714860">
        <id>P09936</id>
        <label>UCHL1</label>
    </interactant>
    <organismsDiffer>false</organismsDiffer>
    <experiments>3</experiments>
</comment>
<comment type="interaction">
    <interactant intactId="EBI-6448852">
        <id>Q9UI08-2</id>
    </interactant>
    <interactant intactId="EBI-720609">
        <id>O76024</id>
        <label>WFS1</label>
    </interactant>
    <organismsDiffer>false</organismsDiffer>
    <experiments>3</experiments>
</comment>
<comment type="interaction">
    <interactant intactId="EBI-6448852">
        <id>Q9UI08-2</id>
    </interactant>
    <interactant intactId="EBI-524753">
        <id>Q8IUH5</id>
        <label>ZDHHC17</label>
    </interactant>
    <organismsDiffer>false</organismsDiffer>
    <experiments>2</experiments>
</comment>
<comment type="interaction">
    <interactant intactId="EBI-6448852">
        <id>Q9UI08-2</id>
    </interactant>
    <interactant intactId="EBI-625509">
        <id>Q8N720</id>
        <label>ZNF655</label>
    </interactant>
    <organismsDiffer>false</organismsDiffer>
    <experiments>3</experiments>
</comment>
<comment type="interaction">
    <interactant intactId="EBI-6448852">
        <id>Q9UI08-2</id>
    </interactant>
    <interactant intactId="EBI-444225">
        <id>Q15942</id>
        <label>ZYX</label>
    </interactant>
    <organismsDiffer>false</organismsDiffer>
    <experiments>5</experiments>
</comment>
<comment type="subcellular location">
    <subcellularLocation>
        <location evidence="3">Cytoplasm</location>
        <location evidence="3">Cytoskeleton</location>
    </subcellularLocation>
    <subcellularLocation>
        <location evidence="3">Cytoplasm</location>
        <location evidence="3">Cytoskeleton</location>
        <location evidence="3">Stress fiber</location>
    </subcellularLocation>
    <subcellularLocation>
        <location evidence="3">Cell projection</location>
        <location evidence="3">Lamellipodium</location>
    </subcellularLocation>
    <text evidence="3">Targeted to the leading edge of lamellipodia and the distal tip of stress fibers through interaction with a number of proteins. In activated T-cells, localizes to the F-actin collar and the distal tip of microspikes.</text>
</comment>
<comment type="alternative products">
    <event type="alternative splicing"/>
    <isoform>
        <id>Q9UI08-1</id>
        <name>2</name>
        <name>EVL-I</name>
        <sequence type="displayed"/>
    </isoform>
    <isoform>
        <id>Q9UI08-2</id>
        <name>1</name>
        <sequence type="described" ref="VSP_004044"/>
    </isoform>
    <isoform>
        <id>Q9UI08-3</id>
        <name>3</name>
        <sequence type="described" ref="VSP_057322 VSP_057323"/>
    </isoform>
    <isoform>
        <id>Q9UI08-4</id>
        <name>4</name>
        <sequence type="described" ref="VSP_058779"/>
    </isoform>
    <isoform>
        <id>Q9UI08-5</id>
        <name>5</name>
        <sequence type="described" ref="VSP_004044 VSP_058778"/>
    </isoform>
</comment>
<comment type="domain">
    <text>The EVH2 domain is comprised of 3 regions. Block A is a thymosin-like domain required for G-actin binding. The KLKR motif within this block is essential for the G-actin binding and for actin polymerization. Block B is required for F-actin binding and subcellular location, and Block C for tetramerization.</text>
</comment>
<comment type="PTM">
    <text evidence="1">Phosphorylated by PKA; phosphorylation abolishes binding to SH3 domains of ABL and SRC.</text>
</comment>
<comment type="miscellaneous">
    <text evidence="1">Required to transform actin polymerization into active movement for the propulsive force of Listeria monocytogenes.</text>
</comment>
<comment type="similarity">
    <text evidence="17">Belongs to the Ena/VASP family.</text>
</comment>
<keyword id="KW-0009">Actin-binding</keyword>
<keyword id="KW-0025">Alternative splicing</keyword>
<keyword id="KW-0966">Cell projection</keyword>
<keyword id="KW-0963">Cytoplasm</keyword>
<keyword id="KW-0206">Cytoskeleton</keyword>
<keyword id="KW-0597">Phosphoprotein</keyword>
<keyword id="KW-1267">Proteomics identification</keyword>
<keyword id="KW-1185">Reference proteome</keyword>
<keyword id="KW-0729">SH3-binding</keyword>
<evidence type="ECO:0000250" key="1"/>
<evidence type="ECO:0000250" key="2">
    <source>
        <dbReference type="UniProtKB" id="O08719"/>
    </source>
</evidence>
<evidence type="ECO:0000250" key="3">
    <source>
        <dbReference type="UniProtKB" id="P70429"/>
    </source>
</evidence>
<evidence type="ECO:0000255" key="4">
    <source>
        <dbReference type="PROSITE-ProRule" id="PRU00410"/>
    </source>
</evidence>
<evidence type="ECO:0000256" key="5">
    <source>
        <dbReference type="SAM" id="MobiDB-lite"/>
    </source>
</evidence>
<evidence type="ECO:0000269" key="6">
    <source>
    </source>
</evidence>
<evidence type="ECO:0000269" key="7">
    <source>
    </source>
</evidence>
<evidence type="ECO:0000269" key="8">
    <source>
    </source>
</evidence>
<evidence type="ECO:0000269" key="9">
    <source>
    </source>
</evidence>
<evidence type="ECO:0000269" key="10">
    <source>
    </source>
</evidence>
<evidence type="ECO:0000269" key="11">
    <source>
    </source>
</evidence>
<evidence type="ECO:0000303" key="12">
    <source>
    </source>
</evidence>
<evidence type="ECO:0000303" key="13">
    <source>
    </source>
</evidence>
<evidence type="ECO:0000303" key="14">
    <source>
    </source>
</evidence>
<evidence type="ECO:0000303" key="15">
    <source ref="19"/>
</evidence>
<evidence type="ECO:0000303" key="16">
    <source ref="2"/>
</evidence>
<evidence type="ECO:0000305" key="17"/>
<evidence type="ECO:0007744" key="18">
    <source>
    </source>
</evidence>
<evidence type="ECO:0007744" key="19">
    <source>
    </source>
</evidence>
<evidence type="ECO:0007744" key="20">
    <source>
    </source>
</evidence>
<evidence type="ECO:0007744" key="21">
    <source>
    </source>
</evidence>
<evidence type="ECO:0007744" key="22">
    <source>
    </source>
</evidence>
<dbReference type="EMBL" id="AF052504">
    <property type="protein sequence ID" value="AAF21709.1"/>
    <property type="molecule type" value="mRNA"/>
</dbReference>
<dbReference type="EMBL" id="AF087843">
    <property type="protein sequence ID" value="AAP97156.1"/>
    <property type="molecule type" value="mRNA"/>
</dbReference>
<dbReference type="EMBL" id="AF112209">
    <property type="protein sequence ID" value="AAF17197.1"/>
    <property type="molecule type" value="mRNA"/>
</dbReference>
<dbReference type="EMBL" id="AK289720">
    <property type="protein sequence ID" value="BAF82409.1"/>
    <property type="molecule type" value="mRNA"/>
</dbReference>
<dbReference type="EMBL" id="AK295919">
    <property type="protein sequence ID" value="BAH12221.1"/>
    <property type="molecule type" value="mRNA"/>
</dbReference>
<dbReference type="EMBL" id="AL133368">
    <property type="status" value="NOT_ANNOTATED_CDS"/>
    <property type="molecule type" value="Genomic_DNA"/>
</dbReference>
<dbReference type="EMBL" id="AL133523">
    <property type="status" value="NOT_ANNOTATED_CDS"/>
    <property type="molecule type" value="Genomic_DNA"/>
</dbReference>
<dbReference type="EMBL" id="AL157912">
    <property type="status" value="NOT_ANNOTATED_CDS"/>
    <property type="molecule type" value="Genomic_DNA"/>
</dbReference>
<dbReference type="EMBL" id="KF456005">
    <property type="status" value="NOT_ANNOTATED_CDS"/>
    <property type="molecule type" value="Genomic_DNA"/>
</dbReference>
<dbReference type="EMBL" id="KF456007">
    <property type="status" value="NOT_ANNOTATED_CDS"/>
    <property type="molecule type" value="Genomic_DNA"/>
</dbReference>
<dbReference type="EMBL" id="KF456010">
    <property type="status" value="NOT_ANNOTATED_CDS"/>
    <property type="molecule type" value="Genomic_DNA"/>
</dbReference>
<dbReference type="EMBL" id="CH471061">
    <property type="protein sequence ID" value="EAW81684.1"/>
    <property type="molecule type" value="Genomic_DNA"/>
</dbReference>
<dbReference type="EMBL" id="BC023997">
    <property type="protein sequence ID" value="AAH23997.1"/>
    <property type="molecule type" value="mRNA"/>
</dbReference>
<dbReference type="EMBL" id="BC032358">
    <property type="protein sequence ID" value="AAH32358.1"/>
    <property type="molecule type" value="mRNA"/>
</dbReference>
<dbReference type="EMBL" id="AF131766">
    <property type="protein sequence ID" value="AAD20040.1"/>
    <property type="molecule type" value="mRNA"/>
</dbReference>
<dbReference type="EMBL" id="AL133642">
    <property type="protein sequence ID" value="CAB63763.2"/>
    <property type="molecule type" value="mRNA"/>
</dbReference>
<dbReference type="CCDS" id="CCDS81851.1">
    <molecule id="Q9UI08-1"/>
</dbReference>
<dbReference type="CCDS" id="CCDS9955.1">
    <molecule id="Q9UI08-2"/>
</dbReference>
<dbReference type="RefSeq" id="NP_001317150.1">
    <molecule id="Q9UI08-1"/>
    <property type="nucleotide sequence ID" value="NM_001330221.2"/>
</dbReference>
<dbReference type="RefSeq" id="NP_057421.1">
    <molecule id="Q9UI08-2"/>
    <property type="nucleotide sequence ID" value="NM_016337.3"/>
</dbReference>
<dbReference type="RefSeq" id="XP_047287419.1">
    <molecule id="Q9UI08-5"/>
    <property type="nucleotide sequence ID" value="XM_047431463.1"/>
</dbReference>
<dbReference type="RefSeq" id="XP_054232176.1">
    <molecule id="Q9UI08-5"/>
    <property type="nucleotide sequence ID" value="XM_054376201.1"/>
</dbReference>
<dbReference type="SMR" id="Q9UI08"/>
<dbReference type="BioGRID" id="119556">
    <property type="interactions" value="70"/>
</dbReference>
<dbReference type="ELM" id="Q9UI08"/>
<dbReference type="FunCoup" id="Q9UI08">
    <property type="interactions" value="645"/>
</dbReference>
<dbReference type="IntAct" id="Q9UI08">
    <property type="interactions" value="55"/>
</dbReference>
<dbReference type="MINT" id="Q9UI08"/>
<dbReference type="STRING" id="9606.ENSP00000376652"/>
<dbReference type="GlyGen" id="Q9UI08">
    <property type="glycosylation" value="3 sites, 1 O-linked glycan (1 site)"/>
</dbReference>
<dbReference type="iPTMnet" id="Q9UI08"/>
<dbReference type="MetOSite" id="Q9UI08"/>
<dbReference type="PhosphoSitePlus" id="Q9UI08"/>
<dbReference type="BioMuta" id="EVL"/>
<dbReference type="DMDM" id="25090276"/>
<dbReference type="jPOST" id="Q9UI08"/>
<dbReference type="MassIVE" id="Q9UI08"/>
<dbReference type="PaxDb" id="9606-ENSP00000376652"/>
<dbReference type="PeptideAtlas" id="Q9UI08"/>
<dbReference type="ProteomicsDB" id="6523"/>
<dbReference type="ProteomicsDB" id="84445">
    <molecule id="Q9UI08-1"/>
</dbReference>
<dbReference type="ProteomicsDB" id="84446">
    <molecule id="Q9UI08-2"/>
</dbReference>
<dbReference type="Pumba" id="Q9UI08"/>
<dbReference type="Antibodypedia" id="14371">
    <property type="antibodies" value="165 antibodies from 32 providers"/>
</dbReference>
<dbReference type="DNASU" id="51466"/>
<dbReference type="Ensembl" id="ENST00000392920.8">
    <molecule id="Q9UI08-2"/>
    <property type="protein sequence ID" value="ENSP00000376652.3"/>
    <property type="gene ID" value="ENSG00000196405.13"/>
</dbReference>
<dbReference type="Ensembl" id="ENST00000402714.6">
    <molecule id="Q9UI08-1"/>
    <property type="protein sequence ID" value="ENSP00000384720.2"/>
    <property type="gene ID" value="ENSG00000196405.13"/>
</dbReference>
<dbReference type="Ensembl" id="ENST00000544450.6">
    <molecule id="Q9UI08-3"/>
    <property type="protein sequence ID" value="ENSP00000437904.2"/>
    <property type="gene ID" value="ENSG00000196405.13"/>
</dbReference>
<dbReference type="GeneID" id="51466"/>
<dbReference type="KEGG" id="hsa:51466"/>
<dbReference type="MANE-Select" id="ENST00000392920.8">
    <molecule id="Q9UI08-2"/>
    <property type="protein sequence ID" value="ENSP00000376652.3"/>
    <property type="RefSeq nucleotide sequence ID" value="NM_016337.3"/>
    <property type="RefSeq protein sequence ID" value="NP_057421.1"/>
</dbReference>
<dbReference type="UCSC" id="uc001ygt.4">
    <molecule id="Q9UI08-1"/>
    <property type="organism name" value="human"/>
</dbReference>
<dbReference type="AGR" id="HGNC:20234"/>
<dbReference type="CTD" id="51466"/>
<dbReference type="DisGeNET" id="51466"/>
<dbReference type="GeneCards" id="EVL"/>
<dbReference type="HGNC" id="HGNC:20234">
    <property type="gene designation" value="EVL"/>
</dbReference>
<dbReference type="HPA" id="ENSG00000196405">
    <property type="expression patterns" value="Low tissue specificity"/>
</dbReference>
<dbReference type="neXtProt" id="NX_Q9UI08"/>
<dbReference type="OpenTargets" id="ENSG00000196405"/>
<dbReference type="PharmGKB" id="PA134890866"/>
<dbReference type="VEuPathDB" id="HostDB:ENSG00000196405"/>
<dbReference type="eggNOG" id="KOG4590">
    <property type="taxonomic scope" value="Eukaryota"/>
</dbReference>
<dbReference type="GeneTree" id="ENSGT00940000157826"/>
<dbReference type="InParanoid" id="Q9UI08"/>
<dbReference type="OMA" id="RTHFGIN"/>
<dbReference type="OrthoDB" id="31170at2759"/>
<dbReference type="PAN-GO" id="Q9UI08">
    <property type="GO annotations" value="4 GO annotations based on evolutionary models"/>
</dbReference>
<dbReference type="PhylomeDB" id="Q9UI08"/>
<dbReference type="TreeFam" id="TF321411"/>
<dbReference type="PathwayCommons" id="Q9UI08"/>
<dbReference type="Reactome" id="R-HSA-202433">
    <property type="pathway name" value="Generation of second messenger molecules"/>
</dbReference>
<dbReference type="Reactome" id="R-HSA-376176">
    <property type="pathway name" value="Signaling by ROBO receptors"/>
</dbReference>
<dbReference type="Reactome" id="R-HSA-5663220">
    <property type="pathway name" value="RHO GTPases Activate Formins"/>
</dbReference>
<dbReference type="SignaLink" id="Q9UI08"/>
<dbReference type="SIGNOR" id="Q9UI08"/>
<dbReference type="BioGRID-ORCS" id="51466">
    <property type="hits" value="12 hits in 1157 CRISPR screens"/>
</dbReference>
<dbReference type="CD-CODE" id="FB4E32DD">
    <property type="entry name" value="Presynaptic clusters and postsynaptic densities"/>
</dbReference>
<dbReference type="ChiTaRS" id="EVL">
    <property type="organism name" value="human"/>
</dbReference>
<dbReference type="GeneWiki" id="Enah/Vasp-like"/>
<dbReference type="GenomeRNAi" id="51466"/>
<dbReference type="Pharos" id="Q9UI08">
    <property type="development level" value="Tbio"/>
</dbReference>
<dbReference type="PRO" id="PR:Q9UI08"/>
<dbReference type="Proteomes" id="UP000005640">
    <property type="component" value="Chromosome 14"/>
</dbReference>
<dbReference type="RNAct" id="Q9UI08">
    <property type="molecule type" value="protein"/>
</dbReference>
<dbReference type="Bgee" id="ENSG00000196405">
    <property type="expression patterns" value="Expressed in granulocyte and 193 other cell types or tissues"/>
</dbReference>
<dbReference type="ExpressionAtlas" id="Q9UI08">
    <property type="expression patterns" value="baseline and differential"/>
</dbReference>
<dbReference type="GO" id="GO:0005737">
    <property type="term" value="C:cytoplasm"/>
    <property type="evidence" value="ECO:0000250"/>
    <property type="project" value="UniProtKB"/>
</dbReference>
<dbReference type="GO" id="GO:0005829">
    <property type="term" value="C:cytosol"/>
    <property type="evidence" value="ECO:0000304"/>
    <property type="project" value="Reactome"/>
</dbReference>
<dbReference type="GO" id="GO:0005925">
    <property type="term" value="C:focal adhesion"/>
    <property type="evidence" value="ECO:0000250"/>
    <property type="project" value="UniProtKB"/>
</dbReference>
<dbReference type="GO" id="GO:0030027">
    <property type="term" value="C:lamellipodium"/>
    <property type="evidence" value="ECO:0000250"/>
    <property type="project" value="UniProtKB"/>
</dbReference>
<dbReference type="GO" id="GO:0016020">
    <property type="term" value="C:membrane"/>
    <property type="evidence" value="ECO:0007005"/>
    <property type="project" value="UniProtKB"/>
</dbReference>
<dbReference type="GO" id="GO:0005886">
    <property type="term" value="C:plasma membrane"/>
    <property type="evidence" value="ECO:0000318"/>
    <property type="project" value="GO_Central"/>
</dbReference>
<dbReference type="GO" id="GO:0001725">
    <property type="term" value="C:stress fiber"/>
    <property type="evidence" value="ECO:0007669"/>
    <property type="project" value="UniProtKB-SubCell"/>
</dbReference>
<dbReference type="GO" id="GO:0003779">
    <property type="term" value="F:actin binding"/>
    <property type="evidence" value="ECO:0007669"/>
    <property type="project" value="UniProtKB-KW"/>
</dbReference>
<dbReference type="GO" id="GO:0005522">
    <property type="term" value="F:profilin binding"/>
    <property type="evidence" value="ECO:0000250"/>
    <property type="project" value="UniProtKB"/>
</dbReference>
<dbReference type="GO" id="GO:0017124">
    <property type="term" value="F:SH3 domain binding"/>
    <property type="evidence" value="ECO:0000250"/>
    <property type="project" value="UniProtKB"/>
</dbReference>
<dbReference type="GO" id="GO:0007015">
    <property type="term" value="P:actin filament organization"/>
    <property type="evidence" value="ECO:0000304"/>
    <property type="project" value="ProtInc"/>
</dbReference>
<dbReference type="GO" id="GO:0008154">
    <property type="term" value="P:actin polymerization or depolymerization"/>
    <property type="evidence" value="ECO:0000250"/>
    <property type="project" value="UniProtKB"/>
</dbReference>
<dbReference type="GO" id="GO:0009887">
    <property type="term" value="P:animal organ morphogenesis"/>
    <property type="evidence" value="ECO:0000303"/>
    <property type="project" value="UniProtKB"/>
</dbReference>
<dbReference type="GO" id="GO:0007411">
    <property type="term" value="P:axon guidance"/>
    <property type="evidence" value="ECO:0000318"/>
    <property type="project" value="GO_Central"/>
</dbReference>
<dbReference type="GO" id="GO:0007166">
    <property type="term" value="P:cell surface receptor signaling pathway"/>
    <property type="evidence" value="ECO:0000303"/>
    <property type="project" value="UniProtKB"/>
</dbReference>
<dbReference type="GO" id="GO:0010633">
    <property type="term" value="P:negative regulation of epithelial cell migration"/>
    <property type="evidence" value="ECO:0000315"/>
    <property type="project" value="UniProtKB"/>
</dbReference>
<dbReference type="GO" id="GO:1900028">
    <property type="term" value="P:negative regulation of ruffle assembly"/>
    <property type="evidence" value="ECO:0000315"/>
    <property type="project" value="UniProtKB"/>
</dbReference>
<dbReference type="GO" id="GO:0007399">
    <property type="term" value="P:nervous system development"/>
    <property type="evidence" value="ECO:0000303"/>
    <property type="project" value="UniProtKB"/>
</dbReference>
<dbReference type="GO" id="GO:0030838">
    <property type="term" value="P:positive regulation of actin filament polymerization"/>
    <property type="evidence" value="ECO:0000318"/>
    <property type="project" value="GO_Central"/>
</dbReference>
<dbReference type="GO" id="GO:0051496">
    <property type="term" value="P:positive regulation of stress fiber assembly"/>
    <property type="evidence" value="ECO:0000315"/>
    <property type="project" value="UniProtKB"/>
</dbReference>
<dbReference type="GO" id="GO:0051289">
    <property type="term" value="P:protein homotetramerization"/>
    <property type="evidence" value="ECO:0007669"/>
    <property type="project" value="InterPro"/>
</dbReference>
<dbReference type="CDD" id="cd01207">
    <property type="entry name" value="EVH1_Ena_VASP-like"/>
    <property type="match status" value="1"/>
</dbReference>
<dbReference type="CDD" id="cd22185">
    <property type="entry name" value="WH2_hVASP-like"/>
    <property type="match status" value="1"/>
</dbReference>
<dbReference type="FunFam" id="1.20.5.1160:FF:000004">
    <property type="entry name" value="Enah/Vasp-like, isoform CRA_a"/>
    <property type="match status" value="1"/>
</dbReference>
<dbReference type="FunFam" id="2.30.29.30:FF:000071">
    <property type="entry name" value="Enah/Vasp-like, isoform CRA_a"/>
    <property type="match status" value="1"/>
</dbReference>
<dbReference type="Gene3D" id="2.30.29.30">
    <property type="entry name" value="Pleckstrin-homology domain (PH domain)/Phosphotyrosine-binding domain (PTB)"/>
    <property type="match status" value="1"/>
</dbReference>
<dbReference type="Gene3D" id="1.20.5.1160">
    <property type="entry name" value="Vasodilator-stimulated phosphoprotein"/>
    <property type="match status" value="1"/>
</dbReference>
<dbReference type="InterPro" id="IPR011993">
    <property type="entry name" value="PH-like_dom_sf"/>
</dbReference>
<dbReference type="InterPro" id="IPR017354">
    <property type="entry name" value="VASP/EVL"/>
</dbReference>
<dbReference type="InterPro" id="IPR038023">
    <property type="entry name" value="VASP_sf"/>
</dbReference>
<dbReference type="InterPro" id="IPR014885">
    <property type="entry name" value="VASP_tetra"/>
</dbReference>
<dbReference type="InterPro" id="IPR000697">
    <property type="entry name" value="WH1/EVH1_dom"/>
</dbReference>
<dbReference type="PANTHER" id="PTHR11202:SF4">
    <property type="entry name" value="ENA_VASP-LIKE PROTEIN"/>
    <property type="match status" value="1"/>
</dbReference>
<dbReference type="PANTHER" id="PTHR11202">
    <property type="entry name" value="SPROUTY-RELATED, EVH1 DOMAIN-CONTAINING PROTEIN FAMILY MEMBER"/>
    <property type="match status" value="1"/>
</dbReference>
<dbReference type="Pfam" id="PF08776">
    <property type="entry name" value="VASP_tetra"/>
    <property type="match status" value="1"/>
</dbReference>
<dbReference type="Pfam" id="PF00568">
    <property type="entry name" value="WH1"/>
    <property type="match status" value="1"/>
</dbReference>
<dbReference type="PIRSF" id="PIRSF038010">
    <property type="entry name" value="Vasodilator_Phospo"/>
    <property type="match status" value="1"/>
</dbReference>
<dbReference type="SMART" id="SM00461">
    <property type="entry name" value="WH1"/>
    <property type="match status" value="1"/>
</dbReference>
<dbReference type="SUPFAM" id="SSF50729">
    <property type="entry name" value="PH domain-like"/>
    <property type="match status" value="1"/>
</dbReference>
<dbReference type="SUPFAM" id="SSF118370">
    <property type="entry name" value="Vasodilator-stimulated phosphoprotein, VASP, tetramerisation domain"/>
    <property type="match status" value="1"/>
</dbReference>
<dbReference type="PROSITE" id="PS50229">
    <property type="entry name" value="WH1"/>
    <property type="match status" value="1"/>
</dbReference>